<accession>Q86WU2</accession>
<accession>Q8IZK5</accession>
<gene>
    <name evidence="14" type="primary">LDHD</name>
</gene>
<organism>
    <name type="scientific">Homo sapiens</name>
    <name type="common">Human</name>
    <dbReference type="NCBI Taxonomy" id="9606"/>
    <lineage>
        <taxon>Eukaryota</taxon>
        <taxon>Metazoa</taxon>
        <taxon>Chordata</taxon>
        <taxon>Craniata</taxon>
        <taxon>Vertebrata</taxon>
        <taxon>Euteleostomi</taxon>
        <taxon>Mammalia</taxon>
        <taxon>Eutheria</taxon>
        <taxon>Euarchontoglires</taxon>
        <taxon>Primates</taxon>
        <taxon>Haplorrhini</taxon>
        <taxon>Catarrhini</taxon>
        <taxon>Hominidae</taxon>
        <taxon>Homo</taxon>
    </lineage>
</organism>
<sequence>MARLLRSATWELFPWRGYCSQKAKGELCRDFVEALKAVVGGSHVSTAAVVREQHGRDESVHRCEPPDAVVWPQNVEQVSRLAALCYRQGVPIIPFGTGTGLEGGVCAVQGGVCVNLTHMDRILELNQEDFSVVVEPGVTRKALNAHLRDSGLWFPVDPGADASLCGMAATGASGTNAVRYGTMRDNVLNLEVVLPDGRLLHTAGRGRHFRFGFWPEIPHHTAWYSPCVSLGRRKSAAGYNLTGLFVGSEGTLGLITATTLRLHPAPEATVAATCAFPSVQAAVDSTVHILQAAVPVARIEFLDEVMMDACNRYSKLNCLVAPTLFLEFHGSQQALEEQLQRTEEIVQQNGASDFSWAKEAEERSRLWTARHNAWYAALATRPGCKGYSTDVCVPISRLPEIVVQTKEDLNASGLTGSIVGHVGDGNFHCILLVNPDDAEELGRVKAFAEQLGRRALALHGTCTGEHGIGMGKRQLLQEEVGAVGVETMRQLKAVLDPQGLMNPGKVL</sequence>
<name>LDHD_HUMAN</name>
<comment type="function">
    <text evidence="7">Involved in D-lactate, but not L-lactate catabolic process.</text>
</comment>
<comment type="catalytic activity">
    <reaction>
        <text>(R)-lactate + 2 Fe(III)-[cytochrome c] = 2 Fe(II)-[cytochrome c] + pyruvate + 2 H(+)</text>
        <dbReference type="Rhea" id="RHEA:13521"/>
        <dbReference type="Rhea" id="RHEA-COMP:10350"/>
        <dbReference type="Rhea" id="RHEA-COMP:14399"/>
        <dbReference type="ChEBI" id="CHEBI:15361"/>
        <dbReference type="ChEBI" id="CHEBI:15378"/>
        <dbReference type="ChEBI" id="CHEBI:16004"/>
        <dbReference type="ChEBI" id="CHEBI:29033"/>
        <dbReference type="ChEBI" id="CHEBI:29034"/>
        <dbReference type="EC" id="1.1.2.4"/>
    </reaction>
    <physiologicalReaction direction="left-to-right" evidence="10">
        <dbReference type="Rhea" id="RHEA:13522"/>
    </physiologicalReaction>
</comment>
<comment type="cofactor">
    <cofactor evidence="1">
        <name>FAD</name>
        <dbReference type="ChEBI" id="CHEBI:57692"/>
    </cofactor>
</comment>
<comment type="subunit">
    <text evidence="5">Interacts with CSRP3.</text>
</comment>
<comment type="subcellular location">
    <subcellularLocation>
        <location evidence="2">Mitochondrion</location>
    </subcellularLocation>
</comment>
<comment type="alternative products">
    <event type="alternative splicing"/>
    <isoform>
        <id>Q86WU2-1</id>
        <name evidence="6">1</name>
        <sequence type="displayed"/>
    </isoform>
    <isoform>
        <id>Q86WU2-2</id>
        <name evidence="5">2</name>
        <sequence type="described" ref="VSP_052253"/>
    </isoform>
</comment>
<comment type="tissue specificity">
    <text evidence="5">Expressed moderately in heart and liver and at lower levels in skeletal muscle and kidney.</text>
</comment>
<comment type="disease" evidence="7">
    <disease id="DI-05545">
        <name>D-lactic aciduria with gout</name>
        <acronym>DLACD</acronym>
        <description>An autosomal recessive metabolic disorder characterized by D-lactic aciduria in the presence of normal plasma lactic acid.</description>
        <dbReference type="MIM" id="245450"/>
    </disease>
    <text>The disease is caused by variants affecting the gene represented in this entry.</text>
</comment>
<comment type="similarity">
    <text evidence="3">Belongs to the FAD-binding oxidoreductase/transferase type 4 family.</text>
</comment>
<comment type="sequence caution" evidence="9">
    <conflict type="frameshift">
        <sequence resource="EMBL-CDS" id="AAM50322"/>
    </conflict>
</comment>
<keyword id="KW-0007">Acetylation</keyword>
<keyword id="KW-0025">Alternative splicing</keyword>
<keyword id="KW-0225">Disease variant</keyword>
<keyword id="KW-0274">FAD</keyword>
<keyword id="KW-0285">Flavoprotein</keyword>
<keyword id="KW-0496">Mitochondrion</keyword>
<keyword id="KW-0560">Oxidoreductase</keyword>
<keyword id="KW-1267">Proteomics identification</keyword>
<keyword id="KW-1185">Reference proteome</keyword>
<keyword id="KW-0809">Transit peptide</keyword>
<proteinExistence type="evidence at protein level"/>
<protein>
    <recommendedName>
        <fullName>Probable D-lactate dehydrogenase, mitochondrial</fullName>
        <shortName>DLD</shortName>
        <shortName>Lactate dehydrogenase D</shortName>
        <ecNumber evidence="10">1.1.2.4</ecNumber>
    </recommendedName>
</protein>
<evidence type="ECO:0000250" key="1">
    <source>
        <dbReference type="UniProtKB" id="P39976"/>
    </source>
</evidence>
<evidence type="ECO:0000250" key="2">
    <source>
        <dbReference type="UniProtKB" id="Q7TNG8"/>
    </source>
</evidence>
<evidence type="ECO:0000255" key="3"/>
<evidence type="ECO:0000255" key="4">
    <source>
        <dbReference type="PROSITE-ProRule" id="PRU00718"/>
    </source>
</evidence>
<evidence type="ECO:0000269" key="5">
    <source>
    </source>
</evidence>
<evidence type="ECO:0000269" key="6">
    <source>
    </source>
</evidence>
<evidence type="ECO:0000269" key="7">
    <source>
    </source>
</evidence>
<evidence type="ECO:0000303" key="8">
    <source>
    </source>
</evidence>
<evidence type="ECO:0000305" key="9"/>
<evidence type="ECO:0000305" key="10">
    <source>
    </source>
</evidence>
<evidence type="ECO:0000312" key="11">
    <source>
        <dbReference type="EMBL" id="AAH40279.1"/>
    </source>
</evidence>
<evidence type="ECO:0000312" key="12">
    <source>
        <dbReference type="EMBL" id="AAH47902.1"/>
    </source>
</evidence>
<evidence type="ECO:0000312" key="13">
    <source>
        <dbReference type="EMBL" id="AAM50322.1"/>
    </source>
</evidence>
<evidence type="ECO:0000312" key="14">
    <source>
        <dbReference type="HGNC" id="HGNC:19708"/>
    </source>
</evidence>
<dbReference type="EC" id="1.1.2.4" evidence="10"/>
<dbReference type="EMBL" id="AY092767">
    <property type="protein sequence ID" value="AAM50322.1"/>
    <property type="status" value="ALT_FRAME"/>
    <property type="molecule type" value="mRNA"/>
</dbReference>
<dbReference type="EMBL" id="BC040279">
    <property type="protein sequence ID" value="AAH40279.1"/>
    <property type="molecule type" value="mRNA"/>
</dbReference>
<dbReference type="EMBL" id="BC047902">
    <property type="protein sequence ID" value="AAH47902.1"/>
    <property type="molecule type" value="mRNA"/>
</dbReference>
<dbReference type="CCDS" id="CCDS10913.1">
    <molecule id="Q86WU2-1"/>
</dbReference>
<dbReference type="CCDS" id="CCDS45529.1">
    <molecule id="Q86WU2-2"/>
</dbReference>
<dbReference type="RefSeq" id="NP_705690.2">
    <molecule id="Q86WU2-1"/>
    <property type="nucleotide sequence ID" value="NM_153486.3"/>
</dbReference>
<dbReference type="RefSeq" id="NP_919417.1">
    <molecule id="Q86WU2-2"/>
    <property type="nucleotide sequence ID" value="NM_194436.3"/>
</dbReference>
<dbReference type="SMR" id="Q86WU2"/>
<dbReference type="BioGRID" id="128242">
    <property type="interactions" value="99"/>
</dbReference>
<dbReference type="FunCoup" id="Q86WU2">
    <property type="interactions" value="519"/>
</dbReference>
<dbReference type="IntAct" id="Q86WU2">
    <property type="interactions" value="43"/>
</dbReference>
<dbReference type="STRING" id="9606.ENSP00000300051"/>
<dbReference type="iPTMnet" id="Q86WU2"/>
<dbReference type="PhosphoSitePlus" id="Q86WU2"/>
<dbReference type="SwissPalm" id="Q86WU2"/>
<dbReference type="BioMuta" id="LDHD"/>
<dbReference type="DMDM" id="74727712"/>
<dbReference type="jPOST" id="Q86WU2"/>
<dbReference type="MassIVE" id="Q86WU2"/>
<dbReference type="PaxDb" id="9606-ENSP00000300051"/>
<dbReference type="PeptideAtlas" id="Q86WU2"/>
<dbReference type="ProteomicsDB" id="70205">
    <molecule id="Q86WU2-1"/>
</dbReference>
<dbReference type="ProteomicsDB" id="70206">
    <molecule id="Q86WU2-2"/>
</dbReference>
<dbReference type="Antibodypedia" id="30293">
    <property type="antibodies" value="235 antibodies from 29 providers"/>
</dbReference>
<dbReference type="DNASU" id="197257"/>
<dbReference type="Ensembl" id="ENST00000300051.8">
    <molecule id="Q86WU2-1"/>
    <property type="protein sequence ID" value="ENSP00000300051.4"/>
    <property type="gene ID" value="ENSG00000166816.15"/>
</dbReference>
<dbReference type="Ensembl" id="ENST00000450168.3">
    <molecule id="Q86WU2-2"/>
    <property type="protein sequence ID" value="ENSP00000417011.2"/>
    <property type="gene ID" value="ENSG00000166816.15"/>
</dbReference>
<dbReference type="GeneID" id="197257"/>
<dbReference type="KEGG" id="hsa:197257"/>
<dbReference type="MANE-Select" id="ENST00000450168.3">
    <molecule id="Q86WU2-2"/>
    <property type="protein sequence ID" value="ENSP00000417011.2"/>
    <property type="RefSeq nucleotide sequence ID" value="NM_194436.3"/>
    <property type="RefSeq protein sequence ID" value="NP_919417.1"/>
</dbReference>
<dbReference type="UCSC" id="uc002fdm.4">
    <molecule id="Q86WU2-1"/>
    <property type="organism name" value="human"/>
</dbReference>
<dbReference type="AGR" id="HGNC:19708"/>
<dbReference type="CTD" id="197257"/>
<dbReference type="DisGeNET" id="197257"/>
<dbReference type="GeneCards" id="LDHD"/>
<dbReference type="HGNC" id="HGNC:19708">
    <property type="gene designation" value="LDHD"/>
</dbReference>
<dbReference type="HPA" id="ENSG00000166816">
    <property type="expression patterns" value="Tissue enhanced (heart muscle, liver)"/>
</dbReference>
<dbReference type="MalaCards" id="LDHD"/>
<dbReference type="MIM" id="245450">
    <property type="type" value="phenotype"/>
</dbReference>
<dbReference type="MIM" id="607490">
    <property type="type" value="gene"/>
</dbReference>
<dbReference type="neXtProt" id="NX_Q86WU2"/>
<dbReference type="OpenTargets" id="ENSG00000166816"/>
<dbReference type="PharmGKB" id="PA134917525"/>
<dbReference type="VEuPathDB" id="HostDB:ENSG00000166816"/>
<dbReference type="eggNOG" id="KOG1231">
    <property type="taxonomic scope" value="Eukaryota"/>
</dbReference>
<dbReference type="GeneTree" id="ENSGT00940000158705"/>
<dbReference type="HOGENOM" id="CLU_017779_3_0_1"/>
<dbReference type="InParanoid" id="Q86WU2"/>
<dbReference type="OMA" id="GQGFEWA"/>
<dbReference type="OrthoDB" id="5332616at2759"/>
<dbReference type="PAN-GO" id="Q86WU2">
    <property type="GO annotations" value="5 GO annotations based on evolutionary models"/>
</dbReference>
<dbReference type="PhylomeDB" id="Q86WU2"/>
<dbReference type="TreeFam" id="TF314122"/>
<dbReference type="BioCyc" id="MetaCyc:HS15490-MONOMER"/>
<dbReference type="BRENDA" id="1.1.2.4">
    <property type="organism ID" value="2681"/>
</dbReference>
<dbReference type="PathwayCommons" id="Q86WU2"/>
<dbReference type="Reactome" id="R-HSA-1268020">
    <property type="pathway name" value="Mitochondrial protein import"/>
</dbReference>
<dbReference type="Reactome" id="R-HSA-9837999">
    <property type="pathway name" value="Mitochondrial protein degradation"/>
</dbReference>
<dbReference type="SignaLink" id="Q86WU2"/>
<dbReference type="BioGRID-ORCS" id="197257">
    <property type="hits" value="10 hits in 1150 CRISPR screens"/>
</dbReference>
<dbReference type="GenomeRNAi" id="197257"/>
<dbReference type="Pharos" id="Q86WU2">
    <property type="development level" value="Tbio"/>
</dbReference>
<dbReference type="PRO" id="PR:Q86WU2"/>
<dbReference type="Proteomes" id="UP000005640">
    <property type="component" value="Chromosome 16"/>
</dbReference>
<dbReference type="RNAct" id="Q86WU2">
    <property type="molecule type" value="protein"/>
</dbReference>
<dbReference type="Bgee" id="ENSG00000166816">
    <property type="expression patterns" value="Expressed in apex of heart and 101 other cell types or tissues"/>
</dbReference>
<dbReference type="ExpressionAtlas" id="Q86WU2">
    <property type="expression patterns" value="baseline and differential"/>
</dbReference>
<dbReference type="GO" id="GO:0005743">
    <property type="term" value="C:mitochondrial inner membrane"/>
    <property type="evidence" value="ECO:0000304"/>
    <property type="project" value="Reactome"/>
</dbReference>
<dbReference type="GO" id="GO:0005739">
    <property type="term" value="C:mitochondrion"/>
    <property type="evidence" value="ECO:0006056"/>
    <property type="project" value="FlyBase"/>
</dbReference>
<dbReference type="GO" id="GO:0004458">
    <property type="term" value="F:D-lactate dehydrogenase (cytochrome) activity"/>
    <property type="evidence" value="ECO:0000318"/>
    <property type="project" value="GO_Central"/>
</dbReference>
<dbReference type="GO" id="GO:0008720">
    <property type="term" value="F:D-lactate dehydrogenase activity"/>
    <property type="evidence" value="ECO:0000318"/>
    <property type="project" value="GO_Central"/>
</dbReference>
<dbReference type="GO" id="GO:0071949">
    <property type="term" value="F:FAD binding"/>
    <property type="evidence" value="ECO:0007669"/>
    <property type="project" value="InterPro"/>
</dbReference>
<dbReference type="GO" id="GO:0050660">
    <property type="term" value="F:flavin adenine dinucleotide binding"/>
    <property type="evidence" value="ECO:0000318"/>
    <property type="project" value="GO_Central"/>
</dbReference>
<dbReference type="GO" id="GO:1903457">
    <property type="term" value="P:lactate catabolic process"/>
    <property type="evidence" value="ECO:0000315"/>
    <property type="project" value="UniProtKB"/>
</dbReference>
<dbReference type="FunFam" id="1.10.45.10:FF:000001">
    <property type="entry name" value="D-lactate dehydrogenase mitochondrial"/>
    <property type="match status" value="1"/>
</dbReference>
<dbReference type="FunFam" id="3.30.70.2740:FF:000001">
    <property type="entry name" value="D-lactate dehydrogenase mitochondrial"/>
    <property type="match status" value="1"/>
</dbReference>
<dbReference type="FunFam" id="3.30.70.2190:FF:000003">
    <property type="entry name" value="Glycolate oxidase, subunit GlcD"/>
    <property type="match status" value="1"/>
</dbReference>
<dbReference type="FunFam" id="3.30.43.10:FF:000010">
    <property type="entry name" value="probable D-lactate dehydrogenase, mitochondrial"/>
    <property type="match status" value="1"/>
</dbReference>
<dbReference type="FunFam" id="3.30.465.10:FF:000030">
    <property type="entry name" value="probable D-lactate dehydrogenase, mitochondrial"/>
    <property type="match status" value="1"/>
</dbReference>
<dbReference type="Gene3D" id="3.30.465.10">
    <property type="match status" value="1"/>
</dbReference>
<dbReference type="Gene3D" id="3.30.70.2190">
    <property type="match status" value="1"/>
</dbReference>
<dbReference type="Gene3D" id="3.30.70.2740">
    <property type="match status" value="1"/>
</dbReference>
<dbReference type="Gene3D" id="3.30.43.10">
    <property type="entry name" value="Uridine Diphospho-n-acetylenolpyruvylglucosamine Reductase, domain 2"/>
    <property type="match status" value="1"/>
</dbReference>
<dbReference type="Gene3D" id="1.10.45.10">
    <property type="entry name" value="Vanillyl-alcohol Oxidase, Chain A, domain 4"/>
    <property type="match status" value="1"/>
</dbReference>
<dbReference type="InterPro" id="IPR004113">
    <property type="entry name" value="FAD-bd_oxidored_4_C"/>
</dbReference>
<dbReference type="InterPro" id="IPR016166">
    <property type="entry name" value="FAD-bd_PCMH"/>
</dbReference>
<dbReference type="InterPro" id="IPR036318">
    <property type="entry name" value="FAD-bd_PCMH-like_sf"/>
</dbReference>
<dbReference type="InterPro" id="IPR016167">
    <property type="entry name" value="FAD-bd_PCMH_sub1"/>
</dbReference>
<dbReference type="InterPro" id="IPR016169">
    <property type="entry name" value="FAD-bd_PCMH_sub2"/>
</dbReference>
<dbReference type="InterPro" id="IPR016164">
    <property type="entry name" value="FAD-linked_Oxase-like_C"/>
</dbReference>
<dbReference type="InterPro" id="IPR006094">
    <property type="entry name" value="Oxid_FAD_bind_N"/>
</dbReference>
<dbReference type="InterPro" id="IPR016171">
    <property type="entry name" value="Vanillyl_alc_oxidase_C-sub2"/>
</dbReference>
<dbReference type="PANTHER" id="PTHR11748">
    <property type="entry name" value="D-LACTATE DEHYDROGENASE"/>
    <property type="match status" value="1"/>
</dbReference>
<dbReference type="PANTHER" id="PTHR11748:SF111">
    <property type="entry name" value="D-LACTATE DEHYDROGENASE, MITOCHONDRIAL-RELATED"/>
    <property type="match status" value="1"/>
</dbReference>
<dbReference type="Pfam" id="PF02913">
    <property type="entry name" value="FAD-oxidase_C"/>
    <property type="match status" value="1"/>
</dbReference>
<dbReference type="Pfam" id="PF01565">
    <property type="entry name" value="FAD_binding_4"/>
    <property type="match status" value="1"/>
</dbReference>
<dbReference type="SUPFAM" id="SSF56176">
    <property type="entry name" value="FAD-binding/transporter-associated domain-like"/>
    <property type="match status" value="1"/>
</dbReference>
<dbReference type="SUPFAM" id="SSF55103">
    <property type="entry name" value="FAD-linked oxidases, C-terminal domain"/>
    <property type="match status" value="1"/>
</dbReference>
<dbReference type="PROSITE" id="PS51387">
    <property type="entry name" value="FAD_PCMH"/>
    <property type="match status" value="1"/>
</dbReference>
<reference evidence="9 13" key="1">
    <citation type="journal article" date="2002" name="Biochem. Biophys. Res. Commun.">
        <title>Identification of putative mammalian D-lactate dehydrogenase enzymes.</title>
        <authorList>
            <person name="Flick M.J."/>
            <person name="Konieczny S.F."/>
        </authorList>
    </citation>
    <scope>NUCLEOTIDE SEQUENCE [MRNA] (ISOFORM 2)</scope>
    <scope>INTERACTION WITH CSRP3</scope>
    <scope>TISSUE SPECIFICITY</scope>
</reference>
<reference evidence="9 11" key="2">
    <citation type="journal article" date="2004" name="Genome Res.">
        <title>The status, quality, and expansion of the NIH full-length cDNA project: the Mammalian Gene Collection (MGC).</title>
        <authorList>
            <consortium name="The MGC Project Team"/>
        </authorList>
    </citation>
    <scope>NUCLEOTIDE SEQUENCE [LARGE SCALE MRNA] (ISOFORM 1)</scope>
    <source>
        <tissue evidence="12">Brain</tissue>
        <tissue evidence="11">Colon</tissue>
    </source>
</reference>
<reference key="3">
    <citation type="journal article" date="2014" name="J. Proteomics">
        <title>An enzyme assisted RP-RPLC approach for in-depth analysis of human liver phosphoproteome.</title>
        <authorList>
            <person name="Bian Y."/>
            <person name="Song C."/>
            <person name="Cheng K."/>
            <person name="Dong M."/>
            <person name="Wang F."/>
            <person name="Huang J."/>
            <person name="Sun D."/>
            <person name="Wang L."/>
            <person name="Ye M."/>
            <person name="Zou H."/>
        </authorList>
    </citation>
    <scope>IDENTIFICATION BY MASS SPECTROMETRY [LARGE SCALE ANALYSIS]</scope>
    <source>
        <tissue>Liver</tissue>
    </source>
</reference>
<reference key="4">
    <citation type="journal article" date="2019" name="Nat. Commun.">
        <title>Identification of human D lactate dehydrogenase deficiency.</title>
        <authorList>
            <person name="Monroe G.R."/>
            <person name="van Eerde A.M."/>
            <person name="Tessadori F."/>
            <person name="Duran K.J."/>
            <person name="Savelberg S.M.C."/>
            <person name="van Alfen J.C."/>
            <person name="Terhal P.A."/>
            <person name="van der Crabben S.N."/>
            <person name="Lichtenbelt K.D."/>
            <person name="Fuchs S.A."/>
            <person name="Gerrits J."/>
            <person name="van Roosmalen M.J."/>
            <person name="van Gassen K.L."/>
            <person name="van Aalderen M."/>
            <person name="Koot B.G."/>
            <person name="Oostendorp M."/>
            <person name="Duran M."/>
            <person name="Visser G."/>
            <person name="de Koning T.J."/>
            <person name="Cali F."/>
            <person name="Bosco P."/>
            <person name="Geleijns K."/>
            <person name="de Sain-van der Velden M.G.M."/>
            <person name="Knoers N.V."/>
            <person name="Bakkers J."/>
            <person name="Verhoeven-Duif N.M."/>
            <person name="van Haaften G."/>
            <person name="Jans J.J."/>
        </authorList>
    </citation>
    <scope>INVOLVEMENT IN DLACD</scope>
    <scope>VARIANTS DLACD CYS-374 AND MET-463</scope>
    <scope>FUNCTION</scope>
</reference>
<feature type="transit peptide" description="Mitochondrion" evidence="3">
    <location>
        <begin position="1"/>
        <end position="52"/>
    </location>
</feature>
<feature type="chain" id="PRO_0000262952" description="Probable D-lactate dehydrogenase, mitochondrial">
    <location>
        <begin position="53"/>
        <end position="507"/>
    </location>
</feature>
<feature type="domain" description="FAD-binding PCMH-type" evidence="4">
    <location>
        <begin position="62"/>
        <end position="265"/>
    </location>
</feature>
<feature type="modified residue" description="N6-acetyllysine" evidence="2">
    <location>
        <position position="36"/>
    </location>
</feature>
<feature type="modified residue" description="N6-acetyllysine" evidence="2">
    <location>
        <position position="315"/>
    </location>
</feature>
<feature type="modified residue" description="N6-acetyllysine; alternate" evidence="2">
    <location>
        <position position="358"/>
    </location>
</feature>
<feature type="modified residue" description="N6-succinyllysine; alternate" evidence="2">
    <location>
        <position position="358"/>
    </location>
</feature>
<feature type="modified residue" description="N6-acetyllysine" evidence="2">
    <location>
        <position position="445"/>
    </location>
</feature>
<feature type="modified residue" description="N6-acetyllysine" evidence="2">
    <location>
        <position position="472"/>
    </location>
</feature>
<feature type="splice variant" id="VSP_052253" description="In isoform 2." evidence="8">
    <location>
        <begin position="211"/>
        <end position="233"/>
    </location>
</feature>
<feature type="sequence variant" id="VAR_029561" description="In dbSNP:rs11644820.">
    <original>R</original>
    <variation>K</variation>
    <location>
        <position position="233"/>
    </location>
</feature>
<feature type="sequence variant" id="VAR_082214" description="In DLACD; probable enzymatic loss-of-function; contrary to the wild-type protein, unable to restore basal D-lactate levels when tested in knockout zebrafish model; dbSNP:rs1567502487." evidence="7">
    <original>W</original>
    <variation>C</variation>
    <location>
        <position position="374"/>
    </location>
</feature>
<feature type="sequence variant" id="VAR_082215" description="In DLACD; probable enzymatic loss-of-function; contrary to the wild-type protein, unable to restore basal D-lactate levels when tested in knockout zebrafish model; dbSNP:rs764877688." evidence="7">
    <original>T</original>
    <variation>M</variation>
    <location>
        <position position="463"/>
    </location>
</feature>
<feature type="sequence conflict" description="In Ref. 1; AAM50322." evidence="9" ref="1">
    <original>T</original>
    <variation>I</variation>
    <location>
        <position position="323"/>
    </location>
</feature>